<name>NADK_STRZJ</name>
<gene>
    <name evidence="1" type="primary">nadK</name>
    <name type="ordered locus">SPJ_1035</name>
</gene>
<reference key="1">
    <citation type="journal article" date="2010" name="Genome Biol.">
        <title>Structure and dynamics of the pan-genome of Streptococcus pneumoniae and closely related species.</title>
        <authorList>
            <person name="Donati C."/>
            <person name="Hiller N.L."/>
            <person name="Tettelin H."/>
            <person name="Muzzi A."/>
            <person name="Croucher N.J."/>
            <person name="Angiuoli S.V."/>
            <person name="Oggioni M."/>
            <person name="Dunning Hotopp J.C."/>
            <person name="Hu F.Z."/>
            <person name="Riley D.R."/>
            <person name="Covacci A."/>
            <person name="Mitchell T.J."/>
            <person name="Bentley S.D."/>
            <person name="Kilian M."/>
            <person name="Ehrlich G.D."/>
            <person name="Rappuoli R."/>
            <person name="Moxon E.R."/>
            <person name="Masignani V."/>
        </authorList>
    </citation>
    <scope>NUCLEOTIDE SEQUENCE [LARGE SCALE GENOMIC DNA]</scope>
    <source>
        <strain>JJA</strain>
    </source>
</reference>
<dbReference type="EC" id="2.7.1.23" evidence="1"/>
<dbReference type="EMBL" id="CP000919">
    <property type="protein sequence ID" value="ACO19918.1"/>
    <property type="molecule type" value="Genomic_DNA"/>
</dbReference>
<dbReference type="RefSeq" id="WP_000799059.1">
    <property type="nucleotide sequence ID" value="NC_012466.1"/>
</dbReference>
<dbReference type="SMR" id="C1CE84"/>
<dbReference type="KEGG" id="sjj:SPJ_1035"/>
<dbReference type="HOGENOM" id="CLU_008831_0_3_9"/>
<dbReference type="Proteomes" id="UP000002206">
    <property type="component" value="Chromosome"/>
</dbReference>
<dbReference type="GO" id="GO:0005737">
    <property type="term" value="C:cytoplasm"/>
    <property type="evidence" value="ECO:0007669"/>
    <property type="project" value="UniProtKB-SubCell"/>
</dbReference>
<dbReference type="GO" id="GO:0005524">
    <property type="term" value="F:ATP binding"/>
    <property type="evidence" value="ECO:0007669"/>
    <property type="project" value="UniProtKB-KW"/>
</dbReference>
<dbReference type="GO" id="GO:0046872">
    <property type="term" value="F:metal ion binding"/>
    <property type="evidence" value="ECO:0007669"/>
    <property type="project" value="UniProtKB-UniRule"/>
</dbReference>
<dbReference type="GO" id="GO:0051287">
    <property type="term" value="F:NAD binding"/>
    <property type="evidence" value="ECO:0007669"/>
    <property type="project" value="UniProtKB-ARBA"/>
</dbReference>
<dbReference type="GO" id="GO:0003951">
    <property type="term" value="F:NAD+ kinase activity"/>
    <property type="evidence" value="ECO:0007669"/>
    <property type="project" value="UniProtKB-UniRule"/>
</dbReference>
<dbReference type="GO" id="GO:0019674">
    <property type="term" value="P:NAD metabolic process"/>
    <property type="evidence" value="ECO:0007669"/>
    <property type="project" value="InterPro"/>
</dbReference>
<dbReference type="GO" id="GO:0006741">
    <property type="term" value="P:NADP biosynthetic process"/>
    <property type="evidence" value="ECO:0007669"/>
    <property type="project" value="UniProtKB-UniRule"/>
</dbReference>
<dbReference type="FunFam" id="2.60.200.30:FF:000002">
    <property type="entry name" value="NAD kinase"/>
    <property type="match status" value="1"/>
</dbReference>
<dbReference type="Gene3D" id="3.40.50.10330">
    <property type="entry name" value="Probable inorganic polyphosphate/atp-NAD kinase, domain 1"/>
    <property type="match status" value="1"/>
</dbReference>
<dbReference type="Gene3D" id="2.60.200.30">
    <property type="entry name" value="Probable inorganic polyphosphate/atp-NAD kinase, domain 2"/>
    <property type="match status" value="1"/>
</dbReference>
<dbReference type="HAMAP" id="MF_00361">
    <property type="entry name" value="NAD_kinase"/>
    <property type="match status" value="1"/>
</dbReference>
<dbReference type="InterPro" id="IPR017438">
    <property type="entry name" value="ATP-NAD_kinase_N"/>
</dbReference>
<dbReference type="InterPro" id="IPR017437">
    <property type="entry name" value="ATP-NAD_kinase_PpnK-typ_C"/>
</dbReference>
<dbReference type="InterPro" id="IPR016064">
    <property type="entry name" value="NAD/diacylglycerol_kinase_sf"/>
</dbReference>
<dbReference type="InterPro" id="IPR002504">
    <property type="entry name" value="NADK"/>
</dbReference>
<dbReference type="NCBIfam" id="NF003424">
    <property type="entry name" value="PRK04885.1"/>
    <property type="match status" value="1"/>
</dbReference>
<dbReference type="PANTHER" id="PTHR20275">
    <property type="entry name" value="NAD KINASE"/>
    <property type="match status" value="1"/>
</dbReference>
<dbReference type="PANTHER" id="PTHR20275:SF0">
    <property type="entry name" value="NAD KINASE"/>
    <property type="match status" value="1"/>
</dbReference>
<dbReference type="Pfam" id="PF20143">
    <property type="entry name" value="NAD_kinase_C"/>
    <property type="match status" value="1"/>
</dbReference>
<dbReference type="SUPFAM" id="SSF111331">
    <property type="entry name" value="NAD kinase/diacylglycerol kinase-like"/>
    <property type="match status" value="1"/>
</dbReference>
<comment type="function">
    <text evidence="1">Involved in the regulation of the intracellular balance of NAD and NADP, and is a key enzyme in the biosynthesis of NADP. Catalyzes specifically the phosphorylation on 2'-hydroxyl of the adenosine moiety of NAD to yield NADP.</text>
</comment>
<comment type="catalytic activity">
    <reaction evidence="1">
        <text>NAD(+) + ATP = ADP + NADP(+) + H(+)</text>
        <dbReference type="Rhea" id="RHEA:18629"/>
        <dbReference type="ChEBI" id="CHEBI:15378"/>
        <dbReference type="ChEBI" id="CHEBI:30616"/>
        <dbReference type="ChEBI" id="CHEBI:57540"/>
        <dbReference type="ChEBI" id="CHEBI:58349"/>
        <dbReference type="ChEBI" id="CHEBI:456216"/>
        <dbReference type="EC" id="2.7.1.23"/>
    </reaction>
</comment>
<comment type="cofactor">
    <cofactor evidence="1">
        <name>a divalent metal cation</name>
        <dbReference type="ChEBI" id="CHEBI:60240"/>
    </cofactor>
</comment>
<comment type="subcellular location">
    <subcellularLocation>
        <location evidence="1">Cytoplasm</location>
    </subcellularLocation>
</comment>
<comment type="similarity">
    <text evidence="1">Belongs to the NAD kinase family.</text>
</comment>
<feature type="chain" id="PRO_1000192523" description="NAD kinase">
    <location>
        <begin position="1"/>
        <end position="272"/>
    </location>
</feature>
<feature type="active site" description="Proton acceptor" evidence="1">
    <location>
        <position position="50"/>
    </location>
</feature>
<feature type="binding site" evidence="1">
    <location>
        <begin position="50"/>
        <end position="51"/>
    </location>
    <ligand>
        <name>NAD(+)</name>
        <dbReference type="ChEBI" id="CHEBI:57540"/>
    </ligand>
</feature>
<feature type="binding site" evidence="1">
    <location>
        <begin position="126"/>
        <end position="127"/>
    </location>
    <ligand>
        <name>NAD(+)</name>
        <dbReference type="ChEBI" id="CHEBI:57540"/>
    </ligand>
</feature>
<feature type="binding site" evidence="1">
    <location>
        <position position="152"/>
    </location>
    <ligand>
        <name>NAD(+)</name>
        <dbReference type="ChEBI" id="CHEBI:57540"/>
    </ligand>
</feature>
<feature type="binding site" evidence="1">
    <location>
        <position position="154"/>
    </location>
    <ligand>
        <name>NAD(+)</name>
        <dbReference type="ChEBI" id="CHEBI:57540"/>
    </ligand>
</feature>
<feature type="binding site" evidence="1">
    <location>
        <begin position="165"/>
        <end position="170"/>
    </location>
    <ligand>
        <name>NAD(+)</name>
        <dbReference type="ChEBI" id="CHEBI:57540"/>
    </ligand>
</feature>
<feature type="binding site" evidence="1">
    <location>
        <position position="189"/>
    </location>
    <ligand>
        <name>NAD(+)</name>
        <dbReference type="ChEBI" id="CHEBI:57540"/>
    </ligand>
</feature>
<organism>
    <name type="scientific">Streptococcus pneumoniae (strain JJA)</name>
    <dbReference type="NCBI Taxonomy" id="488222"/>
    <lineage>
        <taxon>Bacteria</taxon>
        <taxon>Bacillati</taxon>
        <taxon>Bacillota</taxon>
        <taxon>Bacilli</taxon>
        <taxon>Lactobacillales</taxon>
        <taxon>Streptococcaceae</taxon>
        <taxon>Streptococcus</taxon>
    </lineage>
</organism>
<protein>
    <recommendedName>
        <fullName evidence="1">NAD kinase</fullName>
        <ecNumber evidence="1">2.7.1.23</ecNumber>
    </recommendedName>
    <alternativeName>
        <fullName evidence="1">ATP-dependent NAD kinase</fullName>
    </alternativeName>
</protein>
<accession>C1CE84</accession>
<keyword id="KW-0067">ATP-binding</keyword>
<keyword id="KW-0963">Cytoplasm</keyword>
<keyword id="KW-0418">Kinase</keyword>
<keyword id="KW-0520">NAD</keyword>
<keyword id="KW-0521">NADP</keyword>
<keyword id="KW-0547">Nucleotide-binding</keyword>
<keyword id="KW-0808">Transferase</keyword>
<sequence>MKNTGKRIDLIANRKPQSQRVLYELRDRLKRNQFILNDTNPDIVISIGGDGMLLSAFHKYENQLEKVRFIGLHTGHLGFYTDYRDFELDKLVTNLQLDTGARVSYPVLNVKVFLENGEVKIFRALNEASIRRSDRTMVADIVINGVPFERFRGDGLTVSTPTGSTAYNKSLGGAVLHPTIEALQLTEIASLNNRVYRTLGSSIIVPKKDKIELIPTRNDYHTISVDNSVYSFRNIERIEYQIAHHKIHFVATPSHTSFWNRVKDAFIGEVDE</sequence>
<proteinExistence type="inferred from homology"/>
<evidence type="ECO:0000255" key="1">
    <source>
        <dbReference type="HAMAP-Rule" id="MF_00361"/>
    </source>
</evidence>